<feature type="chain" id="PRO_1000045568" description="Glycine dehydrogenase (decarboxylating)">
    <location>
        <begin position="1"/>
        <end position="975"/>
    </location>
</feature>
<feature type="modified residue" description="N6-(pyridoxal phosphate)lysine" evidence="1">
    <location>
        <position position="723"/>
    </location>
</feature>
<gene>
    <name evidence="1" type="primary">gcvP</name>
    <name type="ordered locus">Bcen_2911</name>
</gene>
<organism>
    <name type="scientific">Burkholderia orbicola (strain AU 1054)</name>
    <dbReference type="NCBI Taxonomy" id="331271"/>
    <lineage>
        <taxon>Bacteria</taxon>
        <taxon>Pseudomonadati</taxon>
        <taxon>Pseudomonadota</taxon>
        <taxon>Betaproteobacteria</taxon>
        <taxon>Burkholderiales</taxon>
        <taxon>Burkholderiaceae</taxon>
        <taxon>Burkholderia</taxon>
        <taxon>Burkholderia cepacia complex</taxon>
        <taxon>Burkholderia orbicola</taxon>
    </lineage>
</organism>
<name>GCSP_BURO1</name>
<keyword id="KW-0560">Oxidoreductase</keyword>
<keyword id="KW-0663">Pyridoxal phosphate</keyword>
<dbReference type="EC" id="1.4.4.2" evidence="1"/>
<dbReference type="EMBL" id="CP000378">
    <property type="protein sequence ID" value="ABF77807.1"/>
    <property type="molecule type" value="Genomic_DNA"/>
</dbReference>
<dbReference type="SMR" id="Q1BRE8"/>
<dbReference type="HOGENOM" id="CLU_004620_1_1_4"/>
<dbReference type="GO" id="GO:0005829">
    <property type="term" value="C:cytosol"/>
    <property type="evidence" value="ECO:0007669"/>
    <property type="project" value="TreeGrafter"/>
</dbReference>
<dbReference type="GO" id="GO:0005960">
    <property type="term" value="C:glycine cleavage complex"/>
    <property type="evidence" value="ECO:0007669"/>
    <property type="project" value="TreeGrafter"/>
</dbReference>
<dbReference type="GO" id="GO:0016594">
    <property type="term" value="F:glycine binding"/>
    <property type="evidence" value="ECO:0007669"/>
    <property type="project" value="TreeGrafter"/>
</dbReference>
<dbReference type="GO" id="GO:0004375">
    <property type="term" value="F:glycine dehydrogenase (decarboxylating) activity"/>
    <property type="evidence" value="ECO:0007669"/>
    <property type="project" value="UniProtKB-EC"/>
</dbReference>
<dbReference type="GO" id="GO:0030170">
    <property type="term" value="F:pyridoxal phosphate binding"/>
    <property type="evidence" value="ECO:0007669"/>
    <property type="project" value="TreeGrafter"/>
</dbReference>
<dbReference type="GO" id="GO:0019464">
    <property type="term" value="P:glycine decarboxylation via glycine cleavage system"/>
    <property type="evidence" value="ECO:0007669"/>
    <property type="project" value="UniProtKB-UniRule"/>
</dbReference>
<dbReference type="CDD" id="cd00613">
    <property type="entry name" value="GDC-P"/>
    <property type="match status" value="2"/>
</dbReference>
<dbReference type="FunFam" id="3.40.640.10:FF:000005">
    <property type="entry name" value="Glycine dehydrogenase (decarboxylating), mitochondrial"/>
    <property type="match status" value="1"/>
</dbReference>
<dbReference type="FunFam" id="3.90.1150.10:FF:000007">
    <property type="entry name" value="Glycine dehydrogenase (decarboxylating), mitochondrial"/>
    <property type="match status" value="1"/>
</dbReference>
<dbReference type="FunFam" id="3.40.640.10:FF:000007">
    <property type="entry name" value="glycine dehydrogenase (Decarboxylating), mitochondrial"/>
    <property type="match status" value="1"/>
</dbReference>
<dbReference type="Gene3D" id="3.90.1150.10">
    <property type="entry name" value="Aspartate Aminotransferase, domain 1"/>
    <property type="match status" value="2"/>
</dbReference>
<dbReference type="Gene3D" id="3.40.640.10">
    <property type="entry name" value="Type I PLP-dependent aspartate aminotransferase-like (Major domain)"/>
    <property type="match status" value="2"/>
</dbReference>
<dbReference type="HAMAP" id="MF_00711">
    <property type="entry name" value="GcvP"/>
    <property type="match status" value="1"/>
</dbReference>
<dbReference type="InterPro" id="IPR003437">
    <property type="entry name" value="GcvP"/>
</dbReference>
<dbReference type="InterPro" id="IPR049316">
    <property type="entry name" value="GDC-P_C"/>
</dbReference>
<dbReference type="InterPro" id="IPR049315">
    <property type="entry name" value="GDC-P_N"/>
</dbReference>
<dbReference type="InterPro" id="IPR020581">
    <property type="entry name" value="GDC_P"/>
</dbReference>
<dbReference type="InterPro" id="IPR015424">
    <property type="entry name" value="PyrdxlP-dep_Trfase"/>
</dbReference>
<dbReference type="InterPro" id="IPR015421">
    <property type="entry name" value="PyrdxlP-dep_Trfase_major"/>
</dbReference>
<dbReference type="InterPro" id="IPR015422">
    <property type="entry name" value="PyrdxlP-dep_Trfase_small"/>
</dbReference>
<dbReference type="NCBIfam" id="TIGR00461">
    <property type="entry name" value="gcvP"/>
    <property type="match status" value="1"/>
</dbReference>
<dbReference type="NCBIfam" id="NF003346">
    <property type="entry name" value="PRK04366.1"/>
    <property type="match status" value="1"/>
</dbReference>
<dbReference type="PANTHER" id="PTHR11773:SF1">
    <property type="entry name" value="GLYCINE DEHYDROGENASE (DECARBOXYLATING), MITOCHONDRIAL"/>
    <property type="match status" value="1"/>
</dbReference>
<dbReference type="PANTHER" id="PTHR11773">
    <property type="entry name" value="GLYCINE DEHYDROGENASE, DECARBOXYLATING"/>
    <property type="match status" value="1"/>
</dbReference>
<dbReference type="Pfam" id="PF21478">
    <property type="entry name" value="GcvP2_C"/>
    <property type="match status" value="1"/>
</dbReference>
<dbReference type="Pfam" id="PF02347">
    <property type="entry name" value="GDC-P"/>
    <property type="match status" value="2"/>
</dbReference>
<dbReference type="SUPFAM" id="SSF53383">
    <property type="entry name" value="PLP-dependent transferases"/>
    <property type="match status" value="2"/>
</dbReference>
<proteinExistence type="inferred from homology"/>
<reference key="1">
    <citation type="submission" date="2006-05" db="EMBL/GenBank/DDBJ databases">
        <title>Complete sequence of chromosome 1 of Burkholderia cenocepacia AU 1054.</title>
        <authorList>
            <consortium name="US DOE Joint Genome Institute"/>
            <person name="Copeland A."/>
            <person name="Lucas S."/>
            <person name="Lapidus A."/>
            <person name="Barry K."/>
            <person name="Detter J.C."/>
            <person name="Glavina del Rio T."/>
            <person name="Hammon N."/>
            <person name="Israni S."/>
            <person name="Dalin E."/>
            <person name="Tice H."/>
            <person name="Pitluck S."/>
            <person name="Chain P."/>
            <person name="Malfatti S."/>
            <person name="Shin M."/>
            <person name="Vergez L."/>
            <person name="Schmutz J."/>
            <person name="Larimer F."/>
            <person name="Land M."/>
            <person name="Hauser L."/>
            <person name="Kyrpides N."/>
            <person name="Lykidis A."/>
            <person name="LiPuma J.J."/>
            <person name="Konstantinidis K."/>
            <person name="Tiedje J.M."/>
            <person name="Richardson P."/>
        </authorList>
    </citation>
    <scope>NUCLEOTIDE SEQUENCE [LARGE SCALE GENOMIC DNA]</scope>
    <source>
        <strain>AU 1054</strain>
    </source>
</reference>
<comment type="function">
    <text evidence="1">The glycine cleavage system catalyzes the degradation of glycine. The P protein binds the alpha-amino group of glycine through its pyridoxal phosphate cofactor; CO(2) is released and the remaining methylamine moiety is then transferred to the lipoamide cofactor of the H protein.</text>
</comment>
<comment type="catalytic activity">
    <reaction evidence="1">
        <text>N(6)-[(R)-lipoyl]-L-lysyl-[glycine-cleavage complex H protein] + glycine + H(+) = N(6)-[(R)-S(8)-aminomethyldihydrolipoyl]-L-lysyl-[glycine-cleavage complex H protein] + CO2</text>
        <dbReference type="Rhea" id="RHEA:24304"/>
        <dbReference type="Rhea" id="RHEA-COMP:10494"/>
        <dbReference type="Rhea" id="RHEA-COMP:10495"/>
        <dbReference type="ChEBI" id="CHEBI:15378"/>
        <dbReference type="ChEBI" id="CHEBI:16526"/>
        <dbReference type="ChEBI" id="CHEBI:57305"/>
        <dbReference type="ChEBI" id="CHEBI:83099"/>
        <dbReference type="ChEBI" id="CHEBI:83143"/>
        <dbReference type="EC" id="1.4.4.2"/>
    </reaction>
</comment>
<comment type="cofactor">
    <cofactor evidence="1">
        <name>pyridoxal 5'-phosphate</name>
        <dbReference type="ChEBI" id="CHEBI:597326"/>
    </cofactor>
</comment>
<comment type="subunit">
    <text evidence="1">The glycine cleavage system is composed of four proteins: P, T, L and H.</text>
</comment>
<comment type="similarity">
    <text evidence="1">Belongs to the GcvP family.</text>
</comment>
<protein>
    <recommendedName>
        <fullName evidence="1">Glycine dehydrogenase (decarboxylating)</fullName>
        <ecNumber evidence="1">1.4.4.2</ecNumber>
    </recommendedName>
    <alternativeName>
        <fullName evidence="1">Glycine cleavage system P-protein</fullName>
    </alternativeName>
    <alternativeName>
        <fullName evidence="1">Glycine decarboxylase</fullName>
    </alternativeName>
    <alternativeName>
        <fullName evidence="1">Glycine dehydrogenase (aminomethyl-transferring)</fullName>
    </alternativeName>
</protein>
<evidence type="ECO:0000255" key="1">
    <source>
        <dbReference type="HAMAP-Rule" id="MF_00711"/>
    </source>
</evidence>
<accession>Q1BRE8</accession>
<sequence length="975" mass="104165">MKLEHPDRLMNRTPLSLAALETHDAFAERHIGPDAASQQAMLDTLGFASRAALIDAVIPASIRRAETLPLGPFAQPKSEAEALAALRALADKNQVFRSYIGQGYHDTHTPAVILRNVLENPAWYTAYTPYQPEISQGRLEALLNFQQMVADLTGLAISNASLLDEATAAAEAMTLLQRTGKPKSNVFYVADDVLPQTLEVIRTRALPIGIEVKTGPAADAAQANAFGVLLQYPGVNGDVRDYRALTDAIHAAGGHVVVAADLLALTVLTPPGEWGADVAIGNTQRFGVPMGFGGPHAAYLAVRDEFKRQMPGRLVGVTVDAQGKPALRLALQTREQHIRREKATSNVCTAQALLAIMASMYAVYHGPHGLKTIALRVNRIAALLAAGVKQLGFATVNDTFFDTLTIDTGARTAQVHEFAKAKRINLRRVSDTQVGVSVDETTTRDDLADLLDVFAQAAGGTAPAVDALDAGLAGVAALPAGLERTSAYLTHHVFNRHHSETEMLRYLRSLSDKDLALDRSMIPLGSCTMKLNATSEMLPVTWPEFGGIHPFAPAEQTVGYREMIDQLEEMLVAATGYAAVSLQPNAGSQGEYAGLLIIHAYHASRGEGHRDVCLIPASAHGTNPASAHMAGMKVVVVACDAQGNVDIADLKAKAEQHSANLAAIMITYPSTHGVFEQNVREICEIVHAHGGQVYVDGANMNAMVGLTAPGQFGGDVSHLNLHKTFCIPHGGGGPGVGPVAVGAHLAKFLPNQRSTGYARAEDGIGAVSAAPYGSASILPISWMYIAMMGAKNLTAATETAILNANYIAKRLAPHYPVLYSGPGGLVAHECILDLRPIKETSGISVDDVAKRLMDYGFHAPTMSFPVPGTLMVEPTESESQEELDRFIAAMIAIREEIRAVEEGRADREDNPLRHAPHTAAVVTANEWPHAYSREQAAYPVASLGTNKYWPPVGRADNAYGDRNLFCSCVPMSDYA</sequence>